<organismHost>
    <name type="scientific">Pseudoalteromonas espejiana</name>
    <dbReference type="NCBI Taxonomy" id="28107"/>
</organismHost>
<evidence type="ECO:0000269" key="1">
    <source>
    </source>
</evidence>
<evidence type="ECO:0000305" key="2"/>
<evidence type="ECO:0007829" key="3">
    <source>
        <dbReference type="PDB" id="2VVE"/>
    </source>
</evidence>
<proteinExistence type="evidence at protein level"/>
<dbReference type="EMBL" id="AF155037">
    <property type="protein sequence ID" value="AAD43554.1"/>
    <property type="molecule type" value="Genomic_DNA"/>
</dbReference>
<dbReference type="RefSeq" id="NP_049908.1">
    <property type="nucleotide sequence ID" value="NC_000867.1"/>
</dbReference>
<dbReference type="PDB" id="2VVD">
    <property type="method" value="X-ray"/>
    <property type="resolution" value="2.26 A"/>
    <property type="chains" value="A=159-335"/>
</dbReference>
<dbReference type="PDB" id="2VVE">
    <property type="method" value="X-ray"/>
    <property type="resolution" value="1.77 A"/>
    <property type="chains" value="A/B=82-335"/>
</dbReference>
<dbReference type="PDB" id="2W0C">
    <property type="method" value="X-ray"/>
    <property type="resolution" value="7.00 A"/>
    <property type="chains" value="L=1-335"/>
</dbReference>
<dbReference type="PDBsum" id="2VVD"/>
<dbReference type="PDBsum" id="2VVE"/>
<dbReference type="PDBsum" id="2W0C"/>
<dbReference type="SMR" id="Q9XJR3"/>
<dbReference type="KEGG" id="vg:1262026"/>
<dbReference type="EvolutionaryTrace" id="Q9XJR3"/>
<dbReference type="Proteomes" id="UP000002136">
    <property type="component" value="Genome"/>
</dbReference>
<dbReference type="GO" id="GO:0044423">
    <property type="term" value="C:virion component"/>
    <property type="evidence" value="ECO:0007669"/>
    <property type="project" value="UniProtKB-KW"/>
</dbReference>
<dbReference type="Gene3D" id="2.60.120.720">
    <property type="match status" value="1"/>
</dbReference>
<dbReference type="Gene3D" id="2.60.120.770">
    <property type="match status" value="1"/>
</dbReference>
<dbReference type="Pfam" id="PF22188">
    <property type="entry name" value="Phage_spike_P1"/>
    <property type="match status" value="1"/>
</dbReference>
<dbReference type="Pfam" id="PF22464">
    <property type="entry name" value="Spike_JR1"/>
    <property type="match status" value="1"/>
</dbReference>
<dbReference type="Pfam" id="PF22465">
    <property type="entry name" value="Spike_JR2"/>
    <property type="match status" value="1"/>
</dbReference>
<comment type="function">
    <text>Receptor binding protein located at the fivefold vertices.</text>
</comment>
<comment type="subunit">
    <text evidence="1">Monomer.</text>
</comment>
<comment type="subcellular location">
    <subcellularLocation>
        <location evidence="1">Virion</location>
    </subcellularLocation>
</comment>
<comment type="domain">
    <text evidence="2">The C-terminus is responsible for receptor binding activity. The N-terminus is associated with the capsid vertex (Probable).</text>
</comment>
<reference key="1">
    <citation type="journal article" date="1999" name="Virology">
        <title>The complete genome sequence of PM2, the first lipid-containing bacterial virus to be isolated.</title>
        <authorList>
            <person name="Maennistoe R.H."/>
            <person name="Kivelae H.M."/>
            <person name="Paulin L."/>
            <person name="Bamford D.H."/>
            <person name="Bamford J.K."/>
        </authorList>
    </citation>
    <scope>NUCLEOTIDE SEQUENCE [GENOMIC DNA]</scope>
</reference>
<reference key="2">
    <citation type="journal article" date="1999" name="Virology">
        <title>Purification and protein composition of PM2, the first lipid-containing bacterial virus to be isolated.</title>
        <authorList>
            <person name="Kivelae H.M."/>
            <person name="Maennistoe R.H."/>
            <person name="Kalkkinen N."/>
            <person name="Bamford D.H."/>
        </authorList>
    </citation>
    <scope>PROTEIN SEQUENCE OF 1-10</scope>
</reference>
<reference key="3">
    <citation type="journal article" date="2002" name="J. Virol.">
        <title>Bacteriophage PM2 has a protein capsid surrounding a spherical proteinaceous lipid core.</title>
        <authorList>
            <person name="Kivelae H.M."/>
            <person name="Kalkkinen N."/>
            <person name="Bamford D.H."/>
        </authorList>
    </citation>
    <scope>PROTEIN SEQUENCE OF 1-10</scope>
    <scope>SUBUNIT</scope>
    <scope>SUBCELLULAR LOCATION</scope>
</reference>
<accession>Q9XJR3</accession>
<organism>
    <name type="scientific">Pseudoalteromonas phage PM2</name>
    <name type="common">Bacteriophage PM2</name>
    <dbReference type="NCBI Taxonomy" id="2905728"/>
    <lineage>
        <taxon>Viruses</taxon>
        <taxon>Varidnaviria</taxon>
        <taxon>Bamfordvirae</taxon>
        <taxon>Preplasmiviricota</taxon>
        <taxon>Tectiliviricetes</taxon>
        <taxon>Vinavirales</taxon>
        <taxon>Corticoviridae</taxon>
        <taxon>Corticovirus</taxon>
        <taxon>Corticovirus PM2</taxon>
    </lineage>
</organism>
<keyword id="KW-0002">3D-structure</keyword>
<keyword id="KW-0903">Direct protein sequencing</keyword>
<keyword id="KW-1185">Reference proteome</keyword>
<keyword id="KW-0946">Virion</keyword>
<protein>
    <recommendedName>
        <fullName>Spike protein P1</fullName>
        <shortName>Protein I</shortName>
    </recommendedName>
</protein>
<name>SPIKE_BPPM2</name>
<gene>
    <name type="primary">I</name>
</gene>
<feature type="chain" id="PRO_0000339899" description="Spike protein P1">
    <location>
        <begin position="1"/>
        <end position="335"/>
    </location>
</feature>
<feature type="strand" evidence="3">
    <location>
        <begin position="92"/>
        <end position="100"/>
    </location>
</feature>
<feature type="strand" evidence="3">
    <location>
        <begin position="102"/>
        <end position="108"/>
    </location>
</feature>
<feature type="strand" evidence="3">
    <location>
        <begin position="114"/>
        <end position="120"/>
    </location>
</feature>
<feature type="strand" evidence="3">
    <location>
        <begin position="125"/>
        <end position="128"/>
    </location>
</feature>
<feature type="helix" evidence="3">
    <location>
        <begin position="135"/>
        <end position="137"/>
    </location>
</feature>
<feature type="strand" evidence="3">
    <location>
        <begin position="143"/>
        <end position="145"/>
    </location>
</feature>
<feature type="strand" evidence="3">
    <location>
        <begin position="150"/>
        <end position="153"/>
    </location>
</feature>
<feature type="strand" evidence="3">
    <location>
        <begin position="159"/>
        <end position="162"/>
    </location>
</feature>
<feature type="strand" evidence="3">
    <location>
        <begin position="167"/>
        <end position="172"/>
    </location>
</feature>
<feature type="helix" evidence="3">
    <location>
        <begin position="186"/>
        <end position="191"/>
    </location>
</feature>
<feature type="strand" evidence="3">
    <location>
        <begin position="197"/>
        <end position="201"/>
    </location>
</feature>
<feature type="helix" evidence="3">
    <location>
        <begin position="203"/>
        <end position="205"/>
    </location>
</feature>
<feature type="strand" evidence="3">
    <location>
        <begin position="210"/>
        <end position="219"/>
    </location>
</feature>
<feature type="helix" evidence="3">
    <location>
        <begin position="223"/>
        <end position="225"/>
    </location>
</feature>
<feature type="strand" evidence="3">
    <location>
        <begin position="232"/>
        <end position="234"/>
    </location>
</feature>
<feature type="strand" evidence="3">
    <location>
        <begin position="236"/>
        <end position="243"/>
    </location>
</feature>
<feature type="strand" evidence="3">
    <location>
        <begin position="250"/>
        <end position="254"/>
    </location>
</feature>
<feature type="strand" evidence="3">
    <location>
        <begin position="258"/>
        <end position="260"/>
    </location>
</feature>
<feature type="helix" evidence="3">
    <location>
        <begin position="266"/>
        <end position="268"/>
    </location>
</feature>
<feature type="strand" evidence="3">
    <location>
        <begin position="270"/>
        <end position="276"/>
    </location>
</feature>
<feature type="strand" evidence="3">
    <location>
        <begin position="280"/>
        <end position="289"/>
    </location>
</feature>
<feature type="helix" evidence="3">
    <location>
        <begin position="294"/>
        <end position="300"/>
    </location>
</feature>
<feature type="strand" evidence="3">
    <location>
        <begin position="309"/>
        <end position="317"/>
    </location>
</feature>
<feature type="helix" evidence="3">
    <location>
        <begin position="320"/>
        <end position="323"/>
    </location>
</feature>
<feature type="strand" evidence="3">
    <location>
        <begin position="326"/>
        <end position="334"/>
    </location>
</feature>
<sequence>MIVKKKLAAGEFAETFKNGNNITIIKAVGELVLRAYGADGGEGLRTIVRQGVSIKGMNYTSVMLHTEYAQEIEYWVGDLDYSFQEQTTKSRDVNSFQIPLRDGVRELLPEDASRNRASIKSPVDIWIGGENMTALNGIVDGGRKFEAGQEFQINTFGSVNYWVSDEEIRVFKEYSARAKYAQNEGRTALEANNVPFFDIDVPPELDGVPFSLKARVRHKSKGVDGLGDYTSISVKPAFYITEGDETTDTLIKYTSYGSTGSHSGYDFDDNTLDVMVTLSAGVHRVFPVETELDYDAVQEVQHDWYDESFTTFIEVYSDDPLLTVKGYAQILMERT</sequence>